<keyword id="KW-0186">Copper</keyword>
<keyword id="KW-0903">Direct protein sequencing</keyword>
<keyword id="KW-0561">Oxygen transport</keyword>
<keyword id="KW-0964">Secreted</keyword>
<keyword id="KW-0813">Transport</keyword>
<reference evidence="2" key="1">
    <citation type="journal article" date="1988" name="Eur. J. Biochem.">
        <title>Subunits of Panulirus japonicus hemocyanin. 1. Isolation and properties.</title>
        <authorList>
            <person name="Makino N."/>
            <person name="Kimura S."/>
        </authorList>
    </citation>
    <scope>PROTEIN SEQUENCE</scope>
    <source>
        <tissue>Serum</tissue>
    </source>
</reference>
<sequence>DVVASSTAHKQQDINHLLDK</sequence>
<accession>P82312</accession>
<dbReference type="PIR" id="S00494">
    <property type="entry name" value="S00494"/>
</dbReference>
<dbReference type="GO" id="GO:0005576">
    <property type="term" value="C:extracellular region"/>
    <property type="evidence" value="ECO:0007669"/>
    <property type="project" value="UniProtKB-SubCell"/>
</dbReference>
<dbReference type="GO" id="GO:0005344">
    <property type="term" value="F:oxygen carrier activity"/>
    <property type="evidence" value="ECO:0007669"/>
    <property type="project" value="UniProtKB-KW"/>
</dbReference>
<proteinExistence type="evidence at protein level"/>
<feature type="chain" id="PRO_0000204296" description="Hemocyanin subunit II">
    <location>
        <begin position="1"/>
        <end position="20" status="greater than"/>
    </location>
</feature>
<feature type="region of interest" description="Disordered" evidence="1">
    <location>
        <begin position="1"/>
        <end position="20"/>
    </location>
</feature>
<feature type="compositionally biased region" description="Basic and acidic residues" evidence="1">
    <location>
        <begin position="10"/>
        <end position="20"/>
    </location>
</feature>
<feature type="non-terminal residue" evidence="2">
    <location>
        <position position="20"/>
    </location>
</feature>
<evidence type="ECO:0000256" key="1">
    <source>
        <dbReference type="SAM" id="MobiDB-lite"/>
    </source>
</evidence>
<evidence type="ECO:0000305" key="2"/>
<organism evidence="2">
    <name type="scientific">Panulirus japonicus</name>
    <name type="common">Japanese spiny lobster</name>
    <name type="synonym">Palinurus japonicus</name>
    <dbReference type="NCBI Taxonomy" id="6736"/>
    <lineage>
        <taxon>Eukaryota</taxon>
        <taxon>Metazoa</taxon>
        <taxon>Ecdysozoa</taxon>
        <taxon>Arthropoda</taxon>
        <taxon>Crustacea</taxon>
        <taxon>Multicrustacea</taxon>
        <taxon>Malacostraca</taxon>
        <taxon>Eumalacostraca</taxon>
        <taxon>Eucarida</taxon>
        <taxon>Decapoda</taxon>
        <taxon>Pleocyemata</taxon>
        <taxon>Achelata</taxon>
        <taxon>Palinuroidea</taxon>
        <taxon>Palinuridae</taxon>
        <taxon>Panulirus</taxon>
    </lineage>
</organism>
<comment type="function">
    <text>Hemocyanins are copper-containing oxygen carriers occurring freely dissolved in the hemolymph of many mollusks and arthropods.</text>
</comment>
<comment type="subunit">
    <text>Composed of 3 major subunits (IB, II and III) and 1 minor subunit (IA) which form homohexamers and heterohexamers. May also form larger structures.</text>
</comment>
<comment type="subcellular location">
    <subcellularLocation>
        <location>Secreted</location>
        <location>Extracellular space</location>
    </subcellularLocation>
</comment>
<comment type="tissue specificity">
    <text>Hemolymph.</text>
</comment>
<comment type="similarity">
    <text evidence="2">Belongs to the tyrosinase family. Hemocyanin subfamily.</text>
</comment>
<protein>
    <recommendedName>
        <fullName>Hemocyanin subunit II</fullName>
    </recommendedName>
</protein>
<name>HCY2_PANJA</name>